<protein>
    <recommendedName>
        <fullName evidence="1">Gamma-glutamyl phosphate reductase</fullName>
        <shortName evidence="1">GPR</shortName>
        <ecNumber evidence="1">1.2.1.41</ecNumber>
    </recommendedName>
    <alternativeName>
        <fullName evidence="1">Glutamate-5-semialdehyde dehydrogenase</fullName>
    </alternativeName>
    <alternativeName>
        <fullName evidence="1">Glutamyl-gamma-semialdehyde dehydrogenase</fullName>
        <shortName evidence="1">GSA dehydrogenase</shortName>
    </alternativeName>
</protein>
<gene>
    <name evidence="1" type="primary">proA</name>
    <name type="ordered locus">Pmob_0217</name>
</gene>
<name>PROA_PETMO</name>
<proteinExistence type="inferred from homology"/>
<sequence>MNLQEYVLNKAKKAKDTSRKFSSSSETDKIRILNYISEELMANKNYIISENQKDVESAKNTGMSSSLLDRLLLNQERITKMAEGVQKVAQLQSSVGNISQMWKRPNGLMIGKMVVPLGVIAIIYESRPNVTVDAAALCIKSGNCVVLRGGSEAIHSNNALVKIIHQAIERAGFSKDIVQFIEITDRKAVDELMKLYEYIDVLIPRGGPSLIKNTVENSMIPVIQTGAGNCHVYVDRQADLEKALKIVENAKISRPSVCNAAEKLLVHKDIAEEFLPKIYTLFEKKVELRGCEKTLKIIPQMKAAQEEDWSTEYLDYIMAVKIVDSTEEAINHINKYSTKHSEAIITENYTIAQKFLNEIDSAAVYVNASTRFTDGEEFGFGAEMGISTQKLHVRGPIGINELTTTKYIILGNGQVR</sequence>
<comment type="function">
    <text evidence="1">Catalyzes the NADPH-dependent reduction of L-glutamate 5-phosphate into L-glutamate 5-semialdehyde and phosphate. The product spontaneously undergoes cyclization to form 1-pyrroline-5-carboxylate.</text>
</comment>
<comment type="catalytic activity">
    <reaction evidence="1">
        <text>L-glutamate 5-semialdehyde + phosphate + NADP(+) = L-glutamyl 5-phosphate + NADPH + H(+)</text>
        <dbReference type="Rhea" id="RHEA:19541"/>
        <dbReference type="ChEBI" id="CHEBI:15378"/>
        <dbReference type="ChEBI" id="CHEBI:43474"/>
        <dbReference type="ChEBI" id="CHEBI:57783"/>
        <dbReference type="ChEBI" id="CHEBI:58066"/>
        <dbReference type="ChEBI" id="CHEBI:58274"/>
        <dbReference type="ChEBI" id="CHEBI:58349"/>
        <dbReference type="EC" id="1.2.1.41"/>
    </reaction>
</comment>
<comment type="pathway">
    <text evidence="1">Amino-acid biosynthesis; L-proline biosynthesis; L-glutamate 5-semialdehyde from L-glutamate: step 2/2.</text>
</comment>
<comment type="subcellular location">
    <subcellularLocation>
        <location evidence="1">Cytoplasm</location>
    </subcellularLocation>
</comment>
<comment type="similarity">
    <text evidence="1">Belongs to the gamma-glutamyl phosphate reductase family.</text>
</comment>
<evidence type="ECO:0000255" key="1">
    <source>
        <dbReference type="HAMAP-Rule" id="MF_00412"/>
    </source>
</evidence>
<keyword id="KW-0028">Amino-acid biosynthesis</keyword>
<keyword id="KW-0963">Cytoplasm</keyword>
<keyword id="KW-0521">NADP</keyword>
<keyword id="KW-0560">Oxidoreductase</keyword>
<keyword id="KW-0641">Proline biosynthesis</keyword>
<organism>
    <name type="scientific">Petrotoga mobilis (strain DSM 10674 / SJ95)</name>
    <dbReference type="NCBI Taxonomy" id="403833"/>
    <lineage>
        <taxon>Bacteria</taxon>
        <taxon>Thermotogati</taxon>
        <taxon>Thermotogota</taxon>
        <taxon>Thermotogae</taxon>
        <taxon>Petrotogales</taxon>
        <taxon>Petrotogaceae</taxon>
        <taxon>Petrotoga</taxon>
    </lineage>
</organism>
<reference key="1">
    <citation type="submission" date="2007-11" db="EMBL/GenBank/DDBJ databases">
        <title>Complete sequence of Petroga mobilis SJ95.</title>
        <authorList>
            <consortium name="US DOE Joint Genome Institute"/>
            <person name="Copeland A."/>
            <person name="Lucas S."/>
            <person name="Lapidus A."/>
            <person name="Barry K."/>
            <person name="Glavina del Rio T."/>
            <person name="Dalin E."/>
            <person name="Tice H."/>
            <person name="Pitluck S."/>
            <person name="Meincke L."/>
            <person name="Brettin T."/>
            <person name="Bruce D."/>
            <person name="Detter J.C."/>
            <person name="Han C."/>
            <person name="Kuske C.R."/>
            <person name="Schmutz J."/>
            <person name="Larimer F."/>
            <person name="Land M."/>
            <person name="Hauser L."/>
            <person name="Kyrpides N."/>
            <person name="Mikhailova N."/>
            <person name="Noll K."/>
            <person name="Richardson P."/>
        </authorList>
    </citation>
    <scope>NUCLEOTIDE SEQUENCE [LARGE SCALE GENOMIC DNA]</scope>
    <source>
        <strain>DSM 10674 / SJ95</strain>
    </source>
</reference>
<feature type="chain" id="PRO_0000340904" description="Gamma-glutamyl phosphate reductase">
    <location>
        <begin position="1"/>
        <end position="416"/>
    </location>
</feature>
<accession>A9BJ18</accession>
<dbReference type="EC" id="1.2.1.41" evidence="1"/>
<dbReference type="EMBL" id="CP000879">
    <property type="protein sequence ID" value="ABX30963.1"/>
    <property type="molecule type" value="Genomic_DNA"/>
</dbReference>
<dbReference type="RefSeq" id="WP_012208070.1">
    <property type="nucleotide sequence ID" value="NC_010003.1"/>
</dbReference>
<dbReference type="SMR" id="A9BJ18"/>
<dbReference type="STRING" id="403833.Pmob_0217"/>
<dbReference type="KEGG" id="pmo:Pmob_0217"/>
<dbReference type="eggNOG" id="COG0014">
    <property type="taxonomic scope" value="Bacteria"/>
</dbReference>
<dbReference type="HOGENOM" id="CLU_030231_0_0_0"/>
<dbReference type="OrthoDB" id="9809970at2"/>
<dbReference type="UniPathway" id="UPA00098">
    <property type="reaction ID" value="UER00360"/>
</dbReference>
<dbReference type="Proteomes" id="UP000000789">
    <property type="component" value="Chromosome"/>
</dbReference>
<dbReference type="GO" id="GO:0005737">
    <property type="term" value="C:cytoplasm"/>
    <property type="evidence" value="ECO:0007669"/>
    <property type="project" value="UniProtKB-SubCell"/>
</dbReference>
<dbReference type="GO" id="GO:0004350">
    <property type="term" value="F:glutamate-5-semialdehyde dehydrogenase activity"/>
    <property type="evidence" value="ECO:0007669"/>
    <property type="project" value="UniProtKB-UniRule"/>
</dbReference>
<dbReference type="GO" id="GO:0050661">
    <property type="term" value="F:NADP binding"/>
    <property type="evidence" value="ECO:0007669"/>
    <property type="project" value="InterPro"/>
</dbReference>
<dbReference type="GO" id="GO:0055129">
    <property type="term" value="P:L-proline biosynthetic process"/>
    <property type="evidence" value="ECO:0007669"/>
    <property type="project" value="UniProtKB-UniRule"/>
</dbReference>
<dbReference type="CDD" id="cd07079">
    <property type="entry name" value="ALDH_F18-19_ProA-GPR"/>
    <property type="match status" value="1"/>
</dbReference>
<dbReference type="FunFam" id="3.40.309.10:FF:000006">
    <property type="entry name" value="Gamma-glutamyl phosphate reductase"/>
    <property type="match status" value="1"/>
</dbReference>
<dbReference type="Gene3D" id="3.40.605.10">
    <property type="entry name" value="Aldehyde Dehydrogenase, Chain A, domain 1"/>
    <property type="match status" value="1"/>
</dbReference>
<dbReference type="Gene3D" id="3.40.309.10">
    <property type="entry name" value="Aldehyde Dehydrogenase, Chain A, domain 2"/>
    <property type="match status" value="1"/>
</dbReference>
<dbReference type="HAMAP" id="MF_00412">
    <property type="entry name" value="ProA"/>
    <property type="match status" value="1"/>
</dbReference>
<dbReference type="InterPro" id="IPR016161">
    <property type="entry name" value="Ald_DH/histidinol_DH"/>
</dbReference>
<dbReference type="InterPro" id="IPR016163">
    <property type="entry name" value="Ald_DH_C"/>
</dbReference>
<dbReference type="InterPro" id="IPR016162">
    <property type="entry name" value="Ald_DH_N"/>
</dbReference>
<dbReference type="InterPro" id="IPR015590">
    <property type="entry name" value="Aldehyde_DH_dom"/>
</dbReference>
<dbReference type="InterPro" id="IPR020593">
    <property type="entry name" value="G-glutamylP_reductase_CS"/>
</dbReference>
<dbReference type="InterPro" id="IPR012134">
    <property type="entry name" value="Glu-5-SA_DH"/>
</dbReference>
<dbReference type="InterPro" id="IPR000965">
    <property type="entry name" value="GPR_dom"/>
</dbReference>
<dbReference type="NCBIfam" id="NF001221">
    <property type="entry name" value="PRK00197.1"/>
    <property type="match status" value="1"/>
</dbReference>
<dbReference type="NCBIfam" id="TIGR00407">
    <property type="entry name" value="proA"/>
    <property type="match status" value="1"/>
</dbReference>
<dbReference type="PANTHER" id="PTHR11063:SF8">
    <property type="entry name" value="DELTA-1-PYRROLINE-5-CARBOXYLATE SYNTHASE"/>
    <property type="match status" value="1"/>
</dbReference>
<dbReference type="PANTHER" id="PTHR11063">
    <property type="entry name" value="GLUTAMATE SEMIALDEHYDE DEHYDROGENASE"/>
    <property type="match status" value="1"/>
</dbReference>
<dbReference type="Pfam" id="PF00171">
    <property type="entry name" value="Aldedh"/>
    <property type="match status" value="2"/>
</dbReference>
<dbReference type="PIRSF" id="PIRSF000151">
    <property type="entry name" value="GPR"/>
    <property type="match status" value="1"/>
</dbReference>
<dbReference type="SUPFAM" id="SSF53720">
    <property type="entry name" value="ALDH-like"/>
    <property type="match status" value="1"/>
</dbReference>
<dbReference type="PROSITE" id="PS01223">
    <property type="entry name" value="PROA"/>
    <property type="match status" value="1"/>
</dbReference>